<feature type="chain" id="PRO_0000156288" description="Phosphopantetheine adenylyltransferase">
    <location>
        <begin position="1"/>
        <end position="163"/>
    </location>
</feature>
<feature type="binding site" evidence="1">
    <location>
        <begin position="11"/>
        <end position="12"/>
    </location>
    <ligand>
        <name>ATP</name>
        <dbReference type="ChEBI" id="CHEBI:30616"/>
    </ligand>
</feature>
<feature type="binding site" evidence="1">
    <location>
        <position position="11"/>
    </location>
    <ligand>
        <name>substrate</name>
    </ligand>
</feature>
<feature type="binding site" evidence="1">
    <location>
        <position position="19"/>
    </location>
    <ligand>
        <name>ATP</name>
        <dbReference type="ChEBI" id="CHEBI:30616"/>
    </ligand>
</feature>
<feature type="binding site" evidence="1">
    <location>
        <position position="43"/>
    </location>
    <ligand>
        <name>substrate</name>
    </ligand>
</feature>
<feature type="binding site" evidence="1">
    <location>
        <position position="76"/>
    </location>
    <ligand>
        <name>substrate</name>
    </ligand>
</feature>
<feature type="binding site" evidence="1">
    <location>
        <position position="90"/>
    </location>
    <ligand>
        <name>substrate</name>
    </ligand>
</feature>
<feature type="binding site" evidence="1">
    <location>
        <begin position="91"/>
        <end position="93"/>
    </location>
    <ligand>
        <name>ATP</name>
        <dbReference type="ChEBI" id="CHEBI:30616"/>
    </ligand>
</feature>
<feature type="binding site" evidence="1">
    <location>
        <position position="101"/>
    </location>
    <ligand>
        <name>ATP</name>
        <dbReference type="ChEBI" id="CHEBI:30616"/>
    </ligand>
</feature>
<feature type="binding site" evidence="1">
    <location>
        <begin position="126"/>
        <end position="132"/>
    </location>
    <ligand>
        <name>ATP</name>
        <dbReference type="ChEBI" id="CHEBI:30616"/>
    </ligand>
</feature>
<feature type="site" description="Transition state stabilizer" evidence="1">
    <location>
        <position position="19"/>
    </location>
</feature>
<proteinExistence type="inferred from homology"/>
<reference key="1">
    <citation type="journal article" date="2004" name="J. Infect. Dis.">
        <title>Progress toward characterization of the group A Streptococcus metagenome: complete genome sequence of a macrolide-resistant serotype M6 strain.</title>
        <authorList>
            <person name="Banks D.J."/>
            <person name="Porcella S.F."/>
            <person name="Barbian K.D."/>
            <person name="Beres S.B."/>
            <person name="Philips L.E."/>
            <person name="Voyich J.M."/>
            <person name="DeLeo F.R."/>
            <person name="Martin J.M."/>
            <person name="Somerville G.A."/>
            <person name="Musser J.M."/>
        </authorList>
    </citation>
    <scope>NUCLEOTIDE SEQUENCE [LARGE SCALE GENOMIC DNA]</scope>
    <source>
        <strain>ATCC BAA-946 / MGAS10394</strain>
    </source>
</reference>
<evidence type="ECO:0000255" key="1">
    <source>
        <dbReference type="HAMAP-Rule" id="MF_00151"/>
    </source>
</evidence>
<sequence>MLTKIGLYTGSFDPVTNGHLDIVKRASGLFDQIYVGIFDNPTKKSYFKLEVRKAMLTQALADFTNVIVVTSHERLAIDVAKELRVTHLIRGLRNATDFEYEENLEYFNHLLAPNIETVYLISRNKWQALSSSRVRELIHFQSSLEGLVPQSVIAQVEKMNEKT</sequence>
<name>COAD_STRP6</name>
<gene>
    <name evidence="1" type="primary">coaD</name>
    <name type="synonym">kdtB</name>
    <name type="ordered locus">M6_Spy1288</name>
</gene>
<keyword id="KW-0067">ATP-binding</keyword>
<keyword id="KW-0173">Coenzyme A biosynthesis</keyword>
<keyword id="KW-0963">Cytoplasm</keyword>
<keyword id="KW-0460">Magnesium</keyword>
<keyword id="KW-0547">Nucleotide-binding</keyword>
<keyword id="KW-0548">Nucleotidyltransferase</keyword>
<keyword id="KW-0808">Transferase</keyword>
<protein>
    <recommendedName>
        <fullName evidence="1">Phosphopantetheine adenylyltransferase</fullName>
        <ecNumber evidence="1">2.7.7.3</ecNumber>
    </recommendedName>
    <alternativeName>
        <fullName evidence="1">Dephospho-CoA pyrophosphorylase</fullName>
    </alternativeName>
    <alternativeName>
        <fullName evidence="1">Pantetheine-phosphate adenylyltransferase</fullName>
        <shortName evidence="1">PPAT</shortName>
    </alternativeName>
</protein>
<dbReference type="EC" id="2.7.7.3" evidence="1"/>
<dbReference type="EMBL" id="CP000003">
    <property type="protein sequence ID" value="AAT87423.1"/>
    <property type="molecule type" value="Genomic_DNA"/>
</dbReference>
<dbReference type="RefSeq" id="WP_002983821.1">
    <property type="nucleotide sequence ID" value="NC_006086.1"/>
</dbReference>
<dbReference type="SMR" id="Q5XAZ0"/>
<dbReference type="GeneID" id="69900575"/>
<dbReference type="KEGG" id="spa:M6_Spy1288"/>
<dbReference type="HOGENOM" id="CLU_100149_0_1_9"/>
<dbReference type="UniPathway" id="UPA00241">
    <property type="reaction ID" value="UER00355"/>
</dbReference>
<dbReference type="Proteomes" id="UP000001167">
    <property type="component" value="Chromosome"/>
</dbReference>
<dbReference type="GO" id="GO:0005737">
    <property type="term" value="C:cytoplasm"/>
    <property type="evidence" value="ECO:0007669"/>
    <property type="project" value="UniProtKB-SubCell"/>
</dbReference>
<dbReference type="GO" id="GO:0005524">
    <property type="term" value="F:ATP binding"/>
    <property type="evidence" value="ECO:0007669"/>
    <property type="project" value="UniProtKB-KW"/>
</dbReference>
<dbReference type="GO" id="GO:0004595">
    <property type="term" value="F:pantetheine-phosphate adenylyltransferase activity"/>
    <property type="evidence" value="ECO:0007669"/>
    <property type="project" value="UniProtKB-UniRule"/>
</dbReference>
<dbReference type="GO" id="GO:0015937">
    <property type="term" value="P:coenzyme A biosynthetic process"/>
    <property type="evidence" value="ECO:0007669"/>
    <property type="project" value="UniProtKB-UniRule"/>
</dbReference>
<dbReference type="CDD" id="cd02163">
    <property type="entry name" value="PPAT"/>
    <property type="match status" value="1"/>
</dbReference>
<dbReference type="Gene3D" id="3.40.50.620">
    <property type="entry name" value="HUPs"/>
    <property type="match status" value="1"/>
</dbReference>
<dbReference type="HAMAP" id="MF_00151">
    <property type="entry name" value="PPAT_bact"/>
    <property type="match status" value="1"/>
</dbReference>
<dbReference type="InterPro" id="IPR004821">
    <property type="entry name" value="Cyt_trans-like"/>
</dbReference>
<dbReference type="InterPro" id="IPR001980">
    <property type="entry name" value="PPAT"/>
</dbReference>
<dbReference type="InterPro" id="IPR014729">
    <property type="entry name" value="Rossmann-like_a/b/a_fold"/>
</dbReference>
<dbReference type="NCBIfam" id="TIGR01510">
    <property type="entry name" value="coaD_prev_kdtB"/>
    <property type="match status" value="1"/>
</dbReference>
<dbReference type="NCBIfam" id="TIGR00125">
    <property type="entry name" value="cyt_tran_rel"/>
    <property type="match status" value="1"/>
</dbReference>
<dbReference type="PANTHER" id="PTHR21342">
    <property type="entry name" value="PHOSPHOPANTETHEINE ADENYLYLTRANSFERASE"/>
    <property type="match status" value="1"/>
</dbReference>
<dbReference type="PANTHER" id="PTHR21342:SF1">
    <property type="entry name" value="PHOSPHOPANTETHEINE ADENYLYLTRANSFERASE"/>
    <property type="match status" value="1"/>
</dbReference>
<dbReference type="Pfam" id="PF01467">
    <property type="entry name" value="CTP_transf_like"/>
    <property type="match status" value="1"/>
</dbReference>
<dbReference type="PRINTS" id="PR01020">
    <property type="entry name" value="LPSBIOSNTHSS"/>
</dbReference>
<dbReference type="SUPFAM" id="SSF52374">
    <property type="entry name" value="Nucleotidylyl transferase"/>
    <property type="match status" value="1"/>
</dbReference>
<accession>Q5XAZ0</accession>
<comment type="function">
    <text evidence="1">Reversibly transfers an adenylyl group from ATP to 4'-phosphopantetheine, yielding dephospho-CoA (dPCoA) and pyrophosphate.</text>
</comment>
<comment type="catalytic activity">
    <reaction evidence="1">
        <text>(R)-4'-phosphopantetheine + ATP + H(+) = 3'-dephospho-CoA + diphosphate</text>
        <dbReference type="Rhea" id="RHEA:19801"/>
        <dbReference type="ChEBI" id="CHEBI:15378"/>
        <dbReference type="ChEBI" id="CHEBI:30616"/>
        <dbReference type="ChEBI" id="CHEBI:33019"/>
        <dbReference type="ChEBI" id="CHEBI:57328"/>
        <dbReference type="ChEBI" id="CHEBI:61723"/>
        <dbReference type="EC" id="2.7.7.3"/>
    </reaction>
</comment>
<comment type="cofactor">
    <cofactor evidence="1">
        <name>Mg(2+)</name>
        <dbReference type="ChEBI" id="CHEBI:18420"/>
    </cofactor>
</comment>
<comment type="pathway">
    <text evidence="1">Cofactor biosynthesis; coenzyme A biosynthesis; CoA from (R)-pantothenate: step 4/5.</text>
</comment>
<comment type="subunit">
    <text evidence="1">Homohexamer.</text>
</comment>
<comment type="subcellular location">
    <subcellularLocation>
        <location evidence="1">Cytoplasm</location>
    </subcellularLocation>
</comment>
<comment type="similarity">
    <text evidence="1">Belongs to the bacterial CoaD family.</text>
</comment>
<organism>
    <name type="scientific">Streptococcus pyogenes serotype M6 (strain ATCC BAA-946 / MGAS10394)</name>
    <dbReference type="NCBI Taxonomy" id="286636"/>
    <lineage>
        <taxon>Bacteria</taxon>
        <taxon>Bacillati</taxon>
        <taxon>Bacillota</taxon>
        <taxon>Bacilli</taxon>
        <taxon>Lactobacillales</taxon>
        <taxon>Streptococcaceae</taxon>
        <taxon>Streptococcus</taxon>
    </lineage>
</organism>